<evidence type="ECO:0000255" key="1">
    <source>
        <dbReference type="HAMAP-Rule" id="MF_00318"/>
    </source>
</evidence>
<organism>
    <name type="scientific">Shouchella clausii (strain KSM-K16)</name>
    <name type="common">Alkalihalobacillus clausii</name>
    <dbReference type="NCBI Taxonomy" id="66692"/>
    <lineage>
        <taxon>Bacteria</taxon>
        <taxon>Bacillati</taxon>
        <taxon>Bacillota</taxon>
        <taxon>Bacilli</taxon>
        <taxon>Bacillales</taxon>
        <taxon>Bacillaceae</taxon>
        <taxon>Shouchella</taxon>
    </lineage>
</organism>
<gene>
    <name evidence="1" type="primary">eno</name>
    <name type="ordered locus">ABC3017</name>
</gene>
<dbReference type="EC" id="4.2.1.11" evidence="1"/>
<dbReference type="EMBL" id="AP006627">
    <property type="protein sequence ID" value="BAD65551.1"/>
    <property type="molecule type" value="Genomic_DNA"/>
</dbReference>
<dbReference type="RefSeq" id="WP_011247859.1">
    <property type="nucleotide sequence ID" value="NC_006582.1"/>
</dbReference>
<dbReference type="SMR" id="Q5WDK9"/>
<dbReference type="STRING" id="66692.ABC3017"/>
<dbReference type="KEGG" id="bcl:ABC3017"/>
<dbReference type="eggNOG" id="COG0148">
    <property type="taxonomic scope" value="Bacteria"/>
</dbReference>
<dbReference type="HOGENOM" id="CLU_031223_2_1_9"/>
<dbReference type="OrthoDB" id="9804716at2"/>
<dbReference type="UniPathway" id="UPA00109">
    <property type="reaction ID" value="UER00187"/>
</dbReference>
<dbReference type="Proteomes" id="UP000001168">
    <property type="component" value="Chromosome"/>
</dbReference>
<dbReference type="GO" id="GO:0009986">
    <property type="term" value="C:cell surface"/>
    <property type="evidence" value="ECO:0007669"/>
    <property type="project" value="UniProtKB-SubCell"/>
</dbReference>
<dbReference type="GO" id="GO:0005576">
    <property type="term" value="C:extracellular region"/>
    <property type="evidence" value="ECO:0007669"/>
    <property type="project" value="UniProtKB-SubCell"/>
</dbReference>
<dbReference type="GO" id="GO:0000015">
    <property type="term" value="C:phosphopyruvate hydratase complex"/>
    <property type="evidence" value="ECO:0007669"/>
    <property type="project" value="InterPro"/>
</dbReference>
<dbReference type="GO" id="GO:0000287">
    <property type="term" value="F:magnesium ion binding"/>
    <property type="evidence" value="ECO:0007669"/>
    <property type="project" value="UniProtKB-UniRule"/>
</dbReference>
<dbReference type="GO" id="GO:0004634">
    <property type="term" value="F:phosphopyruvate hydratase activity"/>
    <property type="evidence" value="ECO:0007669"/>
    <property type="project" value="UniProtKB-UniRule"/>
</dbReference>
<dbReference type="GO" id="GO:0006096">
    <property type="term" value="P:glycolytic process"/>
    <property type="evidence" value="ECO:0007669"/>
    <property type="project" value="UniProtKB-UniRule"/>
</dbReference>
<dbReference type="CDD" id="cd03313">
    <property type="entry name" value="enolase"/>
    <property type="match status" value="1"/>
</dbReference>
<dbReference type="FunFam" id="3.20.20.120:FF:000001">
    <property type="entry name" value="Enolase"/>
    <property type="match status" value="1"/>
</dbReference>
<dbReference type="FunFam" id="3.30.390.10:FF:000001">
    <property type="entry name" value="Enolase"/>
    <property type="match status" value="1"/>
</dbReference>
<dbReference type="Gene3D" id="3.20.20.120">
    <property type="entry name" value="Enolase-like C-terminal domain"/>
    <property type="match status" value="1"/>
</dbReference>
<dbReference type="Gene3D" id="3.30.390.10">
    <property type="entry name" value="Enolase-like, N-terminal domain"/>
    <property type="match status" value="1"/>
</dbReference>
<dbReference type="HAMAP" id="MF_00318">
    <property type="entry name" value="Enolase"/>
    <property type="match status" value="1"/>
</dbReference>
<dbReference type="InterPro" id="IPR000941">
    <property type="entry name" value="Enolase"/>
</dbReference>
<dbReference type="InterPro" id="IPR036849">
    <property type="entry name" value="Enolase-like_C_sf"/>
</dbReference>
<dbReference type="InterPro" id="IPR029017">
    <property type="entry name" value="Enolase-like_N"/>
</dbReference>
<dbReference type="InterPro" id="IPR020810">
    <property type="entry name" value="Enolase_C"/>
</dbReference>
<dbReference type="InterPro" id="IPR020809">
    <property type="entry name" value="Enolase_CS"/>
</dbReference>
<dbReference type="InterPro" id="IPR020811">
    <property type="entry name" value="Enolase_N"/>
</dbReference>
<dbReference type="NCBIfam" id="TIGR01060">
    <property type="entry name" value="eno"/>
    <property type="match status" value="1"/>
</dbReference>
<dbReference type="PANTHER" id="PTHR11902">
    <property type="entry name" value="ENOLASE"/>
    <property type="match status" value="1"/>
</dbReference>
<dbReference type="PANTHER" id="PTHR11902:SF1">
    <property type="entry name" value="ENOLASE"/>
    <property type="match status" value="1"/>
</dbReference>
<dbReference type="Pfam" id="PF00113">
    <property type="entry name" value="Enolase_C"/>
    <property type="match status" value="1"/>
</dbReference>
<dbReference type="Pfam" id="PF03952">
    <property type="entry name" value="Enolase_N"/>
    <property type="match status" value="1"/>
</dbReference>
<dbReference type="PIRSF" id="PIRSF001400">
    <property type="entry name" value="Enolase"/>
    <property type="match status" value="1"/>
</dbReference>
<dbReference type="PRINTS" id="PR00148">
    <property type="entry name" value="ENOLASE"/>
</dbReference>
<dbReference type="SFLD" id="SFLDF00002">
    <property type="entry name" value="enolase"/>
    <property type="match status" value="1"/>
</dbReference>
<dbReference type="SFLD" id="SFLDG00178">
    <property type="entry name" value="enolase"/>
    <property type="match status" value="1"/>
</dbReference>
<dbReference type="SMART" id="SM01192">
    <property type="entry name" value="Enolase_C"/>
    <property type="match status" value="1"/>
</dbReference>
<dbReference type="SMART" id="SM01193">
    <property type="entry name" value="Enolase_N"/>
    <property type="match status" value="1"/>
</dbReference>
<dbReference type="SUPFAM" id="SSF51604">
    <property type="entry name" value="Enolase C-terminal domain-like"/>
    <property type="match status" value="1"/>
</dbReference>
<dbReference type="SUPFAM" id="SSF54826">
    <property type="entry name" value="Enolase N-terminal domain-like"/>
    <property type="match status" value="1"/>
</dbReference>
<dbReference type="PROSITE" id="PS00164">
    <property type="entry name" value="ENOLASE"/>
    <property type="match status" value="1"/>
</dbReference>
<sequence length="429" mass="46255">MTIISDVYAREVLDSRGNPTVEVEVHLESGVMGRALVPSGASTGEYEAVELRDGGDRYMGKGVQKAVDNVNEKIAPELIGENALDQIGIDRLMIELDGTENKGNFGANAILGVSMAVAHAAANALDIPLYVYLGGFNAKQLPVPMMNIINGGEHADNNVDIQEFMVMPVGAESFKEALRMGAEIFHNLKSVLKAKGYNTAVGDEGGFAPNLSSNEEALATIIEAIEKAGYKPGEQVKLAMDVASSELYSKEDGKYHLAGEGKVLSSEEMVSFYEELVSKYPIISIEDGLDENDWEGHKLLTERLGDKVQLVGDDLFVTNTKKLAEGIEKGIGNSILIKVNQIGTLTETFDAIEMAKRAGYTAVISHRSGETEDATIADIAVATNAGQIKTGAPSRTDRVAKYNQLLRIEDELADLAQYNGLKSFYNLSK</sequence>
<reference key="1">
    <citation type="submission" date="2003-10" db="EMBL/GenBank/DDBJ databases">
        <title>The complete genome sequence of the alkaliphilic Bacillus clausii KSM-K16.</title>
        <authorList>
            <person name="Takaki Y."/>
            <person name="Kageyama Y."/>
            <person name="Shimamura S."/>
            <person name="Suzuki H."/>
            <person name="Nishi S."/>
            <person name="Hatada Y."/>
            <person name="Kawai S."/>
            <person name="Ito S."/>
            <person name="Horikoshi K."/>
        </authorList>
    </citation>
    <scope>NUCLEOTIDE SEQUENCE [LARGE SCALE GENOMIC DNA]</scope>
    <source>
        <strain>KSM-K16</strain>
    </source>
</reference>
<comment type="function">
    <text evidence="1">Catalyzes the reversible conversion of 2-phosphoglycerate (2-PG) into phosphoenolpyruvate (PEP). It is essential for the degradation of carbohydrates via glycolysis.</text>
</comment>
<comment type="catalytic activity">
    <reaction evidence="1">
        <text>(2R)-2-phosphoglycerate = phosphoenolpyruvate + H2O</text>
        <dbReference type="Rhea" id="RHEA:10164"/>
        <dbReference type="ChEBI" id="CHEBI:15377"/>
        <dbReference type="ChEBI" id="CHEBI:58289"/>
        <dbReference type="ChEBI" id="CHEBI:58702"/>
        <dbReference type="EC" id="4.2.1.11"/>
    </reaction>
</comment>
<comment type="cofactor">
    <cofactor evidence="1">
        <name>Mg(2+)</name>
        <dbReference type="ChEBI" id="CHEBI:18420"/>
    </cofactor>
    <text evidence="1">Binds a second Mg(2+) ion via substrate during catalysis.</text>
</comment>
<comment type="pathway">
    <text evidence="1">Carbohydrate degradation; glycolysis; pyruvate from D-glyceraldehyde 3-phosphate: step 4/5.</text>
</comment>
<comment type="subcellular location">
    <subcellularLocation>
        <location evidence="1">Cytoplasm</location>
    </subcellularLocation>
    <subcellularLocation>
        <location evidence="1">Secreted</location>
    </subcellularLocation>
    <subcellularLocation>
        <location evidence="1">Cell surface</location>
    </subcellularLocation>
    <text evidence="1">Fractions of enolase are present in both the cytoplasm and on the cell surface.</text>
</comment>
<comment type="similarity">
    <text evidence="1">Belongs to the enolase family.</text>
</comment>
<keyword id="KW-0963">Cytoplasm</keyword>
<keyword id="KW-0324">Glycolysis</keyword>
<keyword id="KW-0456">Lyase</keyword>
<keyword id="KW-0460">Magnesium</keyword>
<keyword id="KW-0479">Metal-binding</keyword>
<keyword id="KW-1185">Reference proteome</keyword>
<keyword id="KW-0964">Secreted</keyword>
<accession>Q5WDK9</accession>
<proteinExistence type="inferred from homology"/>
<feature type="chain" id="PRO_0000133840" description="Enolase">
    <location>
        <begin position="1"/>
        <end position="429"/>
    </location>
</feature>
<feature type="active site" description="Proton donor" evidence="1">
    <location>
        <position position="204"/>
    </location>
</feature>
<feature type="active site" description="Proton acceptor" evidence="1">
    <location>
        <position position="338"/>
    </location>
</feature>
<feature type="binding site" evidence="1">
    <location>
        <position position="162"/>
    </location>
    <ligand>
        <name>(2R)-2-phosphoglycerate</name>
        <dbReference type="ChEBI" id="CHEBI:58289"/>
    </ligand>
</feature>
<feature type="binding site" evidence="1">
    <location>
        <position position="241"/>
    </location>
    <ligand>
        <name>Mg(2+)</name>
        <dbReference type="ChEBI" id="CHEBI:18420"/>
    </ligand>
</feature>
<feature type="binding site" evidence="1">
    <location>
        <position position="286"/>
    </location>
    <ligand>
        <name>Mg(2+)</name>
        <dbReference type="ChEBI" id="CHEBI:18420"/>
    </ligand>
</feature>
<feature type="binding site" evidence="1">
    <location>
        <position position="313"/>
    </location>
    <ligand>
        <name>Mg(2+)</name>
        <dbReference type="ChEBI" id="CHEBI:18420"/>
    </ligand>
</feature>
<feature type="binding site" evidence="1">
    <location>
        <position position="338"/>
    </location>
    <ligand>
        <name>(2R)-2-phosphoglycerate</name>
        <dbReference type="ChEBI" id="CHEBI:58289"/>
    </ligand>
</feature>
<feature type="binding site" evidence="1">
    <location>
        <position position="367"/>
    </location>
    <ligand>
        <name>(2R)-2-phosphoglycerate</name>
        <dbReference type="ChEBI" id="CHEBI:58289"/>
    </ligand>
</feature>
<feature type="binding site" evidence="1">
    <location>
        <position position="368"/>
    </location>
    <ligand>
        <name>(2R)-2-phosphoglycerate</name>
        <dbReference type="ChEBI" id="CHEBI:58289"/>
    </ligand>
</feature>
<feature type="binding site" evidence="1">
    <location>
        <position position="389"/>
    </location>
    <ligand>
        <name>(2R)-2-phosphoglycerate</name>
        <dbReference type="ChEBI" id="CHEBI:58289"/>
    </ligand>
</feature>
<name>ENO_SHOC1</name>
<protein>
    <recommendedName>
        <fullName evidence="1">Enolase</fullName>
        <ecNumber evidence="1">4.2.1.11</ecNumber>
    </recommendedName>
    <alternativeName>
        <fullName evidence="1">2-phospho-D-glycerate hydro-lyase</fullName>
    </alternativeName>
    <alternativeName>
        <fullName evidence="1">2-phosphoglycerate dehydratase</fullName>
    </alternativeName>
</protein>